<evidence type="ECO:0000256" key="1">
    <source>
        <dbReference type="SAM" id="MobiDB-lite"/>
    </source>
</evidence>
<evidence type="ECO:0000305" key="2"/>
<evidence type="ECO:0000305" key="3">
    <source>
    </source>
</evidence>
<sequence>MELGAATVCVTAVCFNFLVAYSSSPLTLSILSSSICLDDFLGEGVPSVGLFFMEVKNLAKVACLGFLPAEEGNEDDINNGNLDFKGRADERRQPVSNLRM</sequence>
<gene>
    <name type="ordered locus">YDL163W</name>
</gene>
<organism>
    <name type="scientific">Saccharomyces cerevisiae (strain ATCC 204508 / S288c)</name>
    <name type="common">Baker's yeast</name>
    <dbReference type="NCBI Taxonomy" id="559292"/>
    <lineage>
        <taxon>Eukaryota</taxon>
        <taxon>Fungi</taxon>
        <taxon>Dikarya</taxon>
        <taxon>Ascomycota</taxon>
        <taxon>Saccharomycotina</taxon>
        <taxon>Saccharomycetes</taxon>
        <taxon>Saccharomycetales</taxon>
        <taxon>Saccharomycetaceae</taxon>
        <taxon>Saccharomyces</taxon>
    </lineage>
</organism>
<reference key="1">
    <citation type="journal article" date="1997" name="Nature">
        <title>The nucleotide sequence of Saccharomyces cerevisiae chromosome IV.</title>
        <authorList>
            <person name="Jacq C."/>
            <person name="Alt-Moerbe J."/>
            <person name="Andre B."/>
            <person name="Arnold W."/>
            <person name="Bahr A."/>
            <person name="Ballesta J.P.G."/>
            <person name="Bargues M."/>
            <person name="Baron L."/>
            <person name="Becker A."/>
            <person name="Biteau N."/>
            <person name="Bloecker H."/>
            <person name="Blugeon C."/>
            <person name="Boskovic J."/>
            <person name="Brandt P."/>
            <person name="Brueckner M."/>
            <person name="Buitrago M.J."/>
            <person name="Coster F."/>
            <person name="Delaveau T."/>
            <person name="del Rey F."/>
            <person name="Dujon B."/>
            <person name="Eide L.G."/>
            <person name="Garcia-Cantalejo J.M."/>
            <person name="Goffeau A."/>
            <person name="Gomez-Peris A."/>
            <person name="Granotier C."/>
            <person name="Hanemann V."/>
            <person name="Hankeln T."/>
            <person name="Hoheisel J.D."/>
            <person name="Jaeger W."/>
            <person name="Jimenez A."/>
            <person name="Jonniaux J.-L."/>
            <person name="Kraemer C."/>
            <person name="Kuester H."/>
            <person name="Laamanen P."/>
            <person name="Legros Y."/>
            <person name="Louis E.J."/>
            <person name="Moeller-Rieker S."/>
            <person name="Monnet A."/>
            <person name="Moro M."/>
            <person name="Mueller-Auer S."/>
            <person name="Nussbaumer B."/>
            <person name="Paricio N."/>
            <person name="Paulin L."/>
            <person name="Perea J."/>
            <person name="Perez-Alonso M."/>
            <person name="Perez-Ortin J.E."/>
            <person name="Pohl T.M."/>
            <person name="Prydz H."/>
            <person name="Purnelle B."/>
            <person name="Rasmussen S.W."/>
            <person name="Remacha M.A."/>
            <person name="Revuelta J.L."/>
            <person name="Rieger M."/>
            <person name="Salom D."/>
            <person name="Saluz H.P."/>
            <person name="Saiz J.E."/>
            <person name="Saren A.-M."/>
            <person name="Schaefer M."/>
            <person name="Scharfe M."/>
            <person name="Schmidt E.R."/>
            <person name="Schneider C."/>
            <person name="Scholler P."/>
            <person name="Schwarz S."/>
            <person name="Soler-Mira A."/>
            <person name="Urrestarazu L.A."/>
            <person name="Verhasselt P."/>
            <person name="Vissers S."/>
            <person name="Voet M."/>
            <person name="Volckaert G."/>
            <person name="Wagner G."/>
            <person name="Wambutt R."/>
            <person name="Wedler E."/>
            <person name="Wedler H."/>
            <person name="Woelfl S."/>
            <person name="Harris D.E."/>
            <person name="Bowman S."/>
            <person name="Brown D."/>
            <person name="Churcher C.M."/>
            <person name="Connor R."/>
            <person name="Dedman K."/>
            <person name="Gentles S."/>
            <person name="Hamlin N."/>
            <person name="Hunt S."/>
            <person name="Jones L."/>
            <person name="McDonald S."/>
            <person name="Murphy L.D."/>
            <person name="Niblett D."/>
            <person name="Odell C."/>
            <person name="Oliver K."/>
            <person name="Rajandream M.A."/>
            <person name="Richards C."/>
            <person name="Shore L."/>
            <person name="Walsh S.V."/>
            <person name="Barrell B.G."/>
            <person name="Dietrich F.S."/>
            <person name="Mulligan J.T."/>
            <person name="Allen E."/>
            <person name="Araujo R."/>
            <person name="Aviles E."/>
            <person name="Berno A."/>
            <person name="Carpenter J."/>
            <person name="Chen E."/>
            <person name="Cherry J.M."/>
            <person name="Chung E."/>
            <person name="Duncan M."/>
            <person name="Hunicke-Smith S."/>
            <person name="Hyman R.W."/>
            <person name="Komp C."/>
            <person name="Lashkari D."/>
            <person name="Lew H."/>
            <person name="Lin D."/>
            <person name="Mosedale D."/>
            <person name="Nakahara K."/>
            <person name="Namath A."/>
            <person name="Oefner P."/>
            <person name="Oh C."/>
            <person name="Petel F.X."/>
            <person name="Roberts D."/>
            <person name="Schramm S."/>
            <person name="Schroeder M."/>
            <person name="Shogren T."/>
            <person name="Shroff N."/>
            <person name="Winant A."/>
            <person name="Yelton M.A."/>
            <person name="Botstein D."/>
            <person name="Davis R.W."/>
            <person name="Johnston M."/>
            <person name="Andrews S."/>
            <person name="Brinkman R."/>
            <person name="Cooper J."/>
            <person name="Ding H."/>
            <person name="Du Z."/>
            <person name="Favello A."/>
            <person name="Fulton L."/>
            <person name="Gattung S."/>
            <person name="Greco T."/>
            <person name="Hallsworth K."/>
            <person name="Hawkins J."/>
            <person name="Hillier L.W."/>
            <person name="Jier M."/>
            <person name="Johnson D."/>
            <person name="Johnston L."/>
            <person name="Kirsten J."/>
            <person name="Kucaba T."/>
            <person name="Langston Y."/>
            <person name="Latreille P."/>
            <person name="Le T."/>
            <person name="Mardis E."/>
            <person name="Menezes S."/>
            <person name="Miller N."/>
            <person name="Nhan M."/>
            <person name="Pauley A."/>
            <person name="Peluso D."/>
            <person name="Rifkin L."/>
            <person name="Riles L."/>
            <person name="Taich A."/>
            <person name="Trevaskis E."/>
            <person name="Vignati D."/>
            <person name="Wilcox L."/>
            <person name="Wohldman P."/>
            <person name="Vaudin M."/>
            <person name="Wilson R."/>
            <person name="Waterston R."/>
            <person name="Albermann K."/>
            <person name="Hani J."/>
            <person name="Heumann K."/>
            <person name="Kleine K."/>
            <person name="Mewes H.-W."/>
            <person name="Zollner A."/>
            <person name="Zaccaria P."/>
        </authorList>
    </citation>
    <scope>NUCLEOTIDE SEQUENCE [LARGE SCALE GENOMIC DNA]</scope>
    <source>
        <strain>ATCC 204508 / S288c</strain>
    </source>
</reference>
<reference key="2">
    <citation type="journal article" date="2014" name="G3 (Bethesda)">
        <title>The reference genome sequence of Saccharomyces cerevisiae: Then and now.</title>
        <authorList>
            <person name="Engel S.R."/>
            <person name="Dietrich F.S."/>
            <person name="Fisk D.G."/>
            <person name="Binkley G."/>
            <person name="Balakrishnan R."/>
            <person name="Costanzo M.C."/>
            <person name="Dwight S.S."/>
            <person name="Hitz B.C."/>
            <person name="Karra K."/>
            <person name="Nash R.S."/>
            <person name="Weng S."/>
            <person name="Wong E.D."/>
            <person name="Lloyd P."/>
            <person name="Skrzypek M.S."/>
            <person name="Miyasato S.R."/>
            <person name="Simison M."/>
            <person name="Cherry J.M."/>
        </authorList>
    </citation>
    <scope>GENOME REANNOTATION</scope>
    <source>
        <strain>ATCC 204508 / S288c</strain>
    </source>
</reference>
<protein>
    <recommendedName>
        <fullName>Putative uncharacterized protein YDL163W</fullName>
    </recommendedName>
</protein>
<comment type="miscellaneous">
    <text evidence="2">Partially overlaps CDC9.</text>
</comment>
<comment type="caution">
    <text evidence="3">Product of a dubious gene prediction unlikely to encode a functional protein. Because of that it is not part of the S.cerevisiae S288c complete/reference proteome set.</text>
</comment>
<name>YD163_YEAST</name>
<feature type="chain" id="PRO_0000299861" description="Putative uncharacterized protein YDL163W">
    <location>
        <begin position="1"/>
        <end position="100"/>
    </location>
</feature>
<feature type="region of interest" description="Disordered" evidence="1">
    <location>
        <begin position="78"/>
        <end position="100"/>
    </location>
</feature>
<feature type="compositionally biased region" description="Basic and acidic residues" evidence="1">
    <location>
        <begin position="84"/>
        <end position="93"/>
    </location>
</feature>
<dbReference type="EMBL" id="Z67750">
    <property type="protein sequence ID" value="CAA91583.1"/>
    <property type="molecule type" value="Genomic_DNA"/>
</dbReference>
<dbReference type="EMBL" id="Z74212">
    <property type="protein sequence ID" value="CAA98738.1"/>
    <property type="molecule type" value="Genomic_DNA"/>
</dbReference>
<dbReference type="PIR" id="S61050">
    <property type="entry name" value="S61050"/>
</dbReference>
<dbReference type="STRING" id="4932.YDL163W"/>
<dbReference type="PaxDb" id="4932-YDL163W"/>
<dbReference type="EnsemblFungi" id="YDL163W_mRNA">
    <property type="protein sequence ID" value="YDL163W"/>
    <property type="gene ID" value="YDL163W"/>
</dbReference>
<dbReference type="AGR" id="SGD:S000002322"/>
<dbReference type="SGD" id="S000002322">
    <property type="gene designation" value="YDL163W"/>
</dbReference>
<dbReference type="HOGENOM" id="CLU_2308245_0_0_1"/>
<proteinExistence type="uncertain"/>
<accession>Q12148</accession>